<reference key="1">
    <citation type="journal article" date="2003" name="Lancet">
        <title>Genome sequence of Vibrio parahaemolyticus: a pathogenic mechanism distinct from that of V. cholerae.</title>
        <authorList>
            <person name="Makino K."/>
            <person name="Oshima K."/>
            <person name="Kurokawa K."/>
            <person name="Yokoyama K."/>
            <person name="Uda T."/>
            <person name="Tagomori K."/>
            <person name="Iijima Y."/>
            <person name="Najima M."/>
            <person name="Nakano M."/>
            <person name="Yamashita A."/>
            <person name="Kubota Y."/>
            <person name="Kimura S."/>
            <person name="Yasunaga T."/>
            <person name="Honda T."/>
            <person name="Shinagawa H."/>
            <person name="Hattori M."/>
            <person name="Iida T."/>
        </authorList>
    </citation>
    <scope>NUCLEOTIDE SEQUENCE [LARGE SCALE GENOMIC DNA]</scope>
    <source>
        <strain>RIMD 2210633</strain>
    </source>
</reference>
<comment type="function">
    <text evidence="1">Responsible for synthesis of pseudouridine from uracil-55 in the psi GC loop of transfer RNAs.</text>
</comment>
<comment type="catalytic activity">
    <reaction evidence="1">
        <text>uridine(55) in tRNA = pseudouridine(55) in tRNA</text>
        <dbReference type="Rhea" id="RHEA:42532"/>
        <dbReference type="Rhea" id="RHEA-COMP:10101"/>
        <dbReference type="Rhea" id="RHEA-COMP:10102"/>
        <dbReference type="ChEBI" id="CHEBI:65314"/>
        <dbReference type="ChEBI" id="CHEBI:65315"/>
        <dbReference type="EC" id="5.4.99.25"/>
    </reaction>
</comment>
<comment type="similarity">
    <text evidence="1">Belongs to the pseudouridine synthase TruB family. Type 1 subfamily.</text>
</comment>
<keyword id="KW-0413">Isomerase</keyword>
<keyword id="KW-0819">tRNA processing</keyword>
<evidence type="ECO:0000255" key="1">
    <source>
        <dbReference type="HAMAP-Rule" id="MF_01080"/>
    </source>
</evidence>
<proteinExistence type="inferred from homology"/>
<feature type="chain" id="PRO_0000121940" description="tRNA pseudouridine synthase B">
    <location>
        <begin position="1"/>
        <end position="314"/>
    </location>
</feature>
<feature type="active site" description="Nucleophile" evidence="1">
    <location>
        <position position="47"/>
    </location>
</feature>
<organism>
    <name type="scientific">Vibrio parahaemolyticus serotype O3:K6 (strain RIMD 2210633)</name>
    <dbReference type="NCBI Taxonomy" id="223926"/>
    <lineage>
        <taxon>Bacteria</taxon>
        <taxon>Pseudomonadati</taxon>
        <taxon>Pseudomonadota</taxon>
        <taxon>Gammaproteobacteria</taxon>
        <taxon>Vibrionales</taxon>
        <taxon>Vibrionaceae</taxon>
        <taxon>Vibrio</taxon>
    </lineage>
</organism>
<gene>
    <name evidence="1" type="primary">truB</name>
    <name type="ordered locus">VP2454</name>
</gene>
<dbReference type="EC" id="5.4.99.25" evidence="1"/>
<dbReference type="EMBL" id="BA000031">
    <property type="protein sequence ID" value="BAC60717.1"/>
    <property type="molecule type" value="Genomic_DNA"/>
</dbReference>
<dbReference type="RefSeq" id="NP_798833.1">
    <property type="nucleotide sequence ID" value="NC_004603.1"/>
</dbReference>
<dbReference type="RefSeq" id="WP_005481564.1">
    <property type="nucleotide sequence ID" value="NC_004603.1"/>
</dbReference>
<dbReference type="SMR" id="Q87M04"/>
<dbReference type="GeneID" id="1189967"/>
<dbReference type="KEGG" id="vpa:VP2454"/>
<dbReference type="PATRIC" id="fig|223926.6.peg.2355"/>
<dbReference type="eggNOG" id="COG0130">
    <property type="taxonomic scope" value="Bacteria"/>
</dbReference>
<dbReference type="HOGENOM" id="CLU_032087_0_3_6"/>
<dbReference type="Proteomes" id="UP000002493">
    <property type="component" value="Chromosome 1"/>
</dbReference>
<dbReference type="GO" id="GO:0003723">
    <property type="term" value="F:RNA binding"/>
    <property type="evidence" value="ECO:0007669"/>
    <property type="project" value="InterPro"/>
</dbReference>
<dbReference type="GO" id="GO:0160148">
    <property type="term" value="F:tRNA pseudouridine(55) synthase activity"/>
    <property type="evidence" value="ECO:0007669"/>
    <property type="project" value="UniProtKB-EC"/>
</dbReference>
<dbReference type="GO" id="GO:1990481">
    <property type="term" value="P:mRNA pseudouridine synthesis"/>
    <property type="evidence" value="ECO:0007669"/>
    <property type="project" value="TreeGrafter"/>
</dbReference>
<dbReference type="GO" id="GO:0031119">
    <property type="term" value="P:tRNA pseudouridine synthesis"/>
    <property type="evidence" value="ECO:0007669"/>
    <property type="project" value="UniProtKB-UniRule"/>
</dbReference>
<dbReference type="CDD" id="cd02573">
    <property type="entry name" value="PseudoU_synth_EcTruB"/>
    <property type="match status" value="1"/>
</dbReference>
<dbReference type="CDD" id="cd21152">
    <property type="entry name" value="PUA_TruB_bacterial"/>
    <property type="match status" value="1"/>
</dbReference>
<dbReference type="FunFam" id="2.30.130.10:FF:000004">
    <property type="entry name" value="tRNA pseudouridine synthase B"/>
    <property type="match status" value="1"/>
</dbReference>
<dbReference type="FunFam" id="3.30.2350.10:FF:000003">
    <property type="entry name" value="tRNA pseudouridine synthase B"/>
    <property type="match status" value="1"/>
</dbReference>
<dbReference type="Gene3D" id="3.30.2350.10">
    <property type="entry name" value="Pseudouridine synthase"/>
    <property type="match status" value="1"/>
</dbReference>
<dbReference type="Gene3D" id="2.30.130.10">
    <property type="entry name" value="PUA domain"/>
    <property type="match status" value="1"/>
</dbReference>
<dbReference type="HAMAP" id="MF_01080">
    <property type="entry name" value="TruB_bact"/>
    <property type="match status" value="1"/>
</dbReference>
<dbReference type="InterPro" id="IPR020103">
    <property type="entry name" value="PsdUridine_synth_cat_dom_sf"/>
</dbReference>
<dbReference type="InterPro" id="IPR002501">
    <property type="entry name" value="PsdUridine_synth_N"/>
</dbReference>
<dbReference type="InterPro" id="IPR015947">
    <property type="entry name" value="PUA-like_sf"/>
</dbReference>
<dbReference type="InterPro" id="IPR036974">
    <property type="entry name" value="PUA_sf"/>
</dbReference>
<dbReference type="InterPro" id="IPR014780">
    <property type="entry name" value="tRNA_psdUridine_synth_TruB"/>
</dbReference>
<dbReference type="InterPro" id="IPR015240">
    <property type="entry name" value="tRNA_sdUridine_synth_fam1_C"/>
</dbReference>
<dbReference type="InterPro" id="IPR032819">
    <property type="entry name" value="TruB_C"/>
</dbReference>
<dbReference type="NCBIfam" id="TIGR00431">
    <property type="entry name" value="TruB"/>
    <property type="match status" value="1"/>
</dbReference>
<dbReference type="PANTHER" id="PTHR13767:SF2">
    <property type="entry name" value="PSEUDOURIDYLATE SYNTHASE TRUB1"/>
    <property type="match status" value="1"/>
</dbReference>
<dbReference type="PANTHER" id="PTHR13767">
    <property type="entry name" value="TRNA-PSEUDOURIDINE SYNTHASE"/>
    <property type="match status" value="1"/>
</dbReference>
<dbReference type="Pfam" id="PF09157">
    <property type="entry name" value="TruB-C_2"/>
    <property type="match status" value="1"/>
</dbReference>
<dbReference type="Pfam" id="PF16198">
    <property type="entry name" value="TruB_C_2"/>
    <property type="match status" value="1"/>
</dbReference>
<dbReference type="Pfam" id="PF01509">
    <property type="entry name" value="TruB_N"/>
    <property type="match status" value="1"/>
</dbReference>
<dbReference type="SUPFAM" id="SSF55120">
    <property type="entry name" value="Pseudouridine synthase"/>
    <property type="match status" value="1"/>
</dbReference>
<dbReference type="SUPFAM" id="SSF88697">
    <property type="entry name" value="PUA domain-like"/>
    <property type="match status" value="1"/>
</dbReference>
<sequence>MARRRKGRPINGVILLDKPTGISSNDALQKVKRIYFAEKAGHTGALDPLATGMLPICLGEATKFSQFLLDSDKRYRVIAKLGERTNTSDSDGEVVETRPVDVTLEKLEACIEKFRGESDQVPSMFSALKYQGKPLYEYARKGIEVPRESRKITVYEIILHRFEGDEVEMEVHCSKGTYIRTIVDDLGEMLGCGAHVTMLRRTAVAKYPYEKMVTLEQLNELLEQAHREEIAPRELLDPLLMPMDTAVEDLPEVNLIPELADMVQHGQPVQVLGAPEQGFLRLTMGEEHLFIGVGEMNDDGKIAPKRLVVFRDEE</sequence>
<protein>
    <recommendedName>
        <fullName evidence="1">tRNA pseudouridine synthase B</fullName>
        <ecNumber evidence="1">5.4.99.25</ecNumber>
    </recommendedName>
    <alternativeName>
        <fullName evidence="1">tRNA pseudouridine(55) synthase</fullName>
        <shortName evidence="1">Psi55 synthase</shortName>
    </alternativeName>
    <alternativeName>
        <fullName evidence="1">tRNA pseudouridylate synthase</fullName>
    </alternativeName>
    <alternativeName>
        <fullName evidence="1">tRNA-uridine isomerase</fullName>
    </alternativeName>
</protein>
<accession>Q87M04</accession>
<name>TRUB_VIBPA</name>